<dbReference type="EMBL" id="AE017198">
    <property type="protein sequence ID" value="AAS08717.1"/>
    <property type="molecule type" value="Genomic_DNA"/>
</dbReference>
<dbReference type="RefSeq" id="WP_004897682.1">
    <property type="nucleotide sequence ID" value="NC_005362.1"/>
</dbReference>
<dbReference type="SMR" id="P61390"/>
<dbReference type="KEGG" id="ljo:LJ_0896"/>
<dbReference type="eggNOG" id="COG0239">
    <property type="taxonomic scope" value="Bacteria"/>
</dbReference>
<dbReference type="HOGENOM" id="CLU_114342_1_2_9"/>
<dbReference type="Proteomes" id="UP000000581">
    <property type="component" value="Chromosome"/>
</dbReference>
<dbReference type="GO" id="GO:0005886">
    <property type="term" value="C:plasma membrane"/>
    <property type="evidence" value="ECO:0007669"/>
    <property type="project" value="UniProtKB-SubCell"/>
</dbReference>
<dbReference type="GO" id="GO:0062054">
    <property type="term" value="F:fluoride channel activity"/>
    <property type="evidence" value="ECO:0007669"/>
    <property type="project" value="UniProtKB-UniRule"/>
</dbReference>
<dbReference type="GO" id="GO:0046872">
    <property type="term" value="F:metal ion binding"/>
    <property type="evidence" value="ECO:0007669"/>
    <property type="project" value="UniProtKB-KW"/>
</dbReference>
<dbReference type="GO" id="GO:0140114">
    <property type="term" value="P:cellular detoxification of fluoride"/>
    <property type="evidence" value="ECO:0007669"/>
    <property type="project" value="UniProtKB-UniRule"/>
</dbReference>
<dbReference type="HAMAP" id="MF_00454">
    <property type="entry name" value="FluC"/>
    <property type="match status" value="1"/>
</dbReference>
<dbReference type="InterPro" id="IPR003691">
    <property type="entry name" value="FluC"/>
</dbReference>
<dbReference type="PANTHER" id="PTHR28259">
    <property type="entry name" value="FLUORIDE EXPORT PROTEIN 1-RELATED"/>
    <property type="match status" value="1"/>
</dbReference>
<dbReference type="PANTHER" id="PTHR28259:SF1">
    <property type="entry name" value="FLUORIDE EXPORT PROTEIN 1-RELATED"/>
    <property type="match status" value="1"/>
</dbReference>
<dbReference type="Pfam" id="PF02537">
    <property type="entry name" value="CRCB"/>
    <property type="match status" value="1"/>
</dbReference>
<organism>
    <name type="scientific">Lactobacillus johnsonii (strain CNCM I-12250 / La1 / NCC 533)</name>
    <dbReference type="NCBI Taxonomy" id="257314"/>
    <lineage>
        <taxon>Bacteria</taxon>
        <taxon>Bacillati</taxon>
        <taxon>Bacillota</taxon>
        <taxon>Bacilli</taxon>
        <taxon>Lactobacillales</taxon>
        <taxon>Lactobacillaceae</taxon>
        <taxon>Lactobacillus</taxon>
    </lineage>
</organism>
<sequence>MNRRLKNYLSVGIFAFFGGGLRAYLNLIWSQTGTLTANIIGCFLLAFFTYFFVEYREGRDWLVTGLSTGFVGSFTTFSSFNLDTLKQLESGMNSQATIYFFSSIFIGFLFAYLGMLVGKRTGRKLAEKA</sequence>
<comment type="function">
    <text evidence="1">Fluoride-specific ion channel. Important for reducing fluoride concentration in the cell, thus reducing its toxicity.</text>
</comment>
<comment type="catalytic activity">
    <reaction evidence="1">
        <text>fluoride(in) = fluoride(out)</text>
        <dbReference type="Rhea" id="RHEA:76159"/>
        <dbReference type="ChEBI" id="CHEBI:17051"/>
    </reaction>
    <physiologicalReaction direction="left-to-right" evidence="1">
        <dbReference type="Rhea" id="RHEA:76160"/>
    </physiologicalReaction>
</comment>
<comment type="activity regulation">
    <text evidence="1">Na(+) is not transported, but it plays an essential structural role and its presence is essential for fluoride channel function.</text>
</comment>
<comment type="subcellular location">
    <subcellularLocation>
        <location evidence="1">Cell membrane</location>
        <topology evidence="1">Multi-pass membrane protein</topology>
    </subcellularLocation>
</comment>
<comment type="similarity">
    <text evidence="1">Belongs to the fluoride channel Fluc/FEX (TC 1.A.43) family.</text>
</comment>
<protein>
    <recommendedName>
        <fullName evidence="1">Fluoride-specific ion channel FluC 1</fullName>
    </recommendedName>
</protein>
<accession>P61390</accession>
<feature type="chain" id="PRO_0000110114" description="Fluoride-specific ion channel FluC 1">
    <location>
        <begin position="1"/>
        <end position="129"/>
    </location>
</feature>
<feature type="transmembrane region" description="Helical" evidence="1">
    <location>
        <begin position="9"/>
        <end position="29"/>
    </location>
</feature>
<feature type="transmembrane region" description="Helical" evidence="1">
    <location>
        <begin position="33"/>
        <end position="53"/>
    </location>
</feature>
<feature type="transmembrane region" description="Helical" evidence="1">
    <location>
        <begin position="62"/>
        <end position="82"/>
    </location>
</feature>
<feature type="transmembrane region" description="Helical" evidence="1">
    <location>
        <begin position="98"/>
        <end position="118"/>
    </location>
</feature>
<feature type="binding site" evidence="1">
    <location>
        <position position="72"/>
    </location>
    <ligand>
        <name>Na(+)</name>
        <dbReference type="ChEBI" id="CHEBI:29101"/>
        <note>structural</note>
    </ligand>
</feature>
<feature type="binding site" evidence="1">
    <location>
        <position position="75"/>
    </location>
    <ligand>
        <name>Na(+)</name>
        <dbReference type="ChEBI" id="CHEBI:29101"/>
        <note>structural</note>
    </ligand>
</feature>
<gene>
    <name evidence="1" type="primary">fluC1</name>
    <name evidence="1" type="synonym">crcB1</name>
    <name type="ordered locus">LJ_0896</name>
</gene>
<name>FLUC1_LACJO</name>
<proteinExistence type="inferred from homology"/>
<keyword id="KW-1003">Cell membrane</keyword>
<keyword id="KW-0407">Ion channel</keyword>
<keyword id="KW-0406">Ion transport</keyword>
<keyword id="KW-0472">Membrane</keyword>
<keyword id="KW-0479">Metal-binding</keyword>
<keyword id="KW-0915">Sodium</keyword>
<keyword id="KW-0812">Transmembrane</keyword>
<keyword id="KW-1133">Transmembrane helix</keyword>
<keyword id="KW-0813">Transport</keyword>
<reference key="1">
    <citation type="journal article" date="2004" name="Proc. Natl. Acad. Sci. U.S.A.">
        <title>The genome sequence of the probiotic intestinal bacterium Lactobacillus johnsonii NCC 533.</title>
        <authorList>
            <person name="Pridmore R.D."/>
            <person name="Berger B."/>
            <person name="Desiere F."/>
            <person name="Vilanova D."/>
            <person name="Barretto C."/>
            <person name="Pittet A.-C."/>
            <person name="Zwahlen M.-C."/>
            <person name="Rouvet M."/>
            <person name="Altermann E."/>
            <person name="Barrangou R."/>
            <person name="Mollet B."/>
            <person name="Mercenier A."/>
            <person name="Klaenhammer T."/>
            <person name="Arigoni F."/>
            <person name="Schell M.A."/>
        </authorList>
    </citation>
    <scope>NUCLEOTIDE SEQUENCE [LARGE SCALE GENOMIC DNA]</scope>
    <source>
        <strain>CNCM I-1225 / La1 / NCC 533</strain>
    </source>
</reference>
<evidence type="ECO:0000255" key="1">
    <source>
        <dbReference type="HAMAP-Rule" id="MF_00454"/>
    </source>
</evidence>